<proteinExistence type="inferred from homology"/>
<dbReference type="EMBL" id="CP000102">
    <property type="protein sequence ID" value="ABC57657.1"/>
    <property type="molecule type" value="Genomic_DNA"/>
</dbReference>
<dbReference type="RefSeq" id="WP_011406856.1">
    <property type="nucleotide sequence ID" value="NC_007681.1"/>
</dbReference>
<dbReference type="SMR" id="Q2NEU6"/>
<dbReference type="STRING" id="339860.Msp_1280"/>
<dbReference type="KEGG" id="mst:Msp_1280"/>
<dbReference type="eggNOG" id="arCOG04154">
    <property type="taxonomic scope" value="Archaea"/>
</dbReference>
<dbReference type="HOGENOM" id="CLU_080597_2_1_2"/>
<dbReference type="OrthoDB" id="372305at2157"/>
<dbReference type="Proteomes" id="UP000001931">
    <property type="component" value="Chromosome"/>
</dbReference>
<dbReference type="GO" id="GO:1990904">
    <property type="term" value="C:ribonucleoprotein complex"/>
    <property type="evidence" value="ECO:0007669"/>
    <property type="project" value="UniProtKB-KW"/>
</dbReference>
<dbReference type="GO" id="GO:0005840">
    <property type="term" value="C:ribosome"/>
    <property type="evidence" value="ECO:0007669"/>
    <property type="project" value="UniProtKB-KW"/>
</dbReference>
<dbReference type="GO" id="GO:0003735">
    <property type="term" value="F:structural constituent of ribosome"/>
    <property type="evidence" value="ECO:0007669"/>
    <property type="project" value="InterPro"/>
</dbReference>
<dbReference type="GO" id="GO:0006412">
    <property type="term" value="P:translation"/>
    <property type="evidence" value="ECO:0007669"/>
    <property type="project" value="UniProtKB-UniRule"/>
</dbReference>
<dbReference type="CDD" id="cd11382">
    <property type="entry name" value="Ribosomal_S8e"/>
    <property type="match status" value="1"/>
</dbReference>
<dbReference type="Gene3D" id="2.40.10.310">
    <property type="match status" value="1"/>
</dbReference>
<dbReference type="HAMAP" id="MF_00029">
    <property type="entry name" value="Ribosomal_eS8"/>
    <property type="match status" value="1"/>
</dbReference>
<dbReference type="InterPro" id="IPR001047">
    <property type="entry name" value="Ribosomal_eS8"/>
</dbReference>
<dbReference type="InterPro" id="IPR020919">
    <property type="entry name" value="Ribosomal_protein_eS8_arc"/>
</dbReference>
<dbReference type="InterPro" id="IPR022309">
    <property type="entry name" value="Ribosomal_Se8/biogenesis_NSA2"/>
</dbReference>
<dbReference type="NCBIfam" id="TIGR00307">
    <property type="entry name" value="eS8"/>
    <property type="match status" value="1"/>
</dbReference>
<dbReference type="PANTHER" id="PTHR10394">
    <property type="entry name" value="40S RIBOSOMAL PROTEIN S8"/>
    <property type="match status" value="1"/>
</dbReference>
<dbReference type="Pfam" id="PF01201">
    <property type="entry name" value="Ribosomal_S8e"/>
    <property type="match status" value="1"/>
</dbReference>
<gene>
    <name evidence="1" type="primary">rps8e</name>
    <name type="ordered locus">Msp_1280</name>
</gene>
<accession>Q2NEU6</accession>
<sequence>MAIWQGSSLRKPSGARSRRNKNKRNAEFGRNPAETRIGDEVKKEIVARGNCTKTRATVAKRINVIDPKDNSSKNVEMLTVLENGANSHFVRRNIITKGAIVETEIGKAKITSRPGQKGIVNGVLIE</sequence>
<keyword id="KW-1185">Reference proteome</keyword>
<keyword id="KW-0687">Ribonucleoprotein</keyword>
<keyword id="KW-0689">Ribosomal protein</keyword>
<organism>
    <name type="scientific">Methanosphaera stadtmanae (strain ATCC 43021 / DSM 3091 / JCM 11832 / MCB-3)</name>
    <dbReference type="NCBI Taxonomy" id="339860"/>
    <lineage>
        <taxon>Archaea</taxon>
        <taxon>Methanobacteriati</taxon>
        <taxon>Methanobacteriota</taxon>
        <taxon>Methanomada group</taxon>
        <taxon>Methanobacteria</taxon>
        <taxon>Methanobacteriales</taxon>
        <taxon>Methanobacteriaceae</taxon>
        <taxon>Methanosphaera</taxon>
    </lineage>
</organism>
<protein>
    <recommendedName>
        <fullName evidence="1">Small ribosomal subunit protein eS8</fullName>
    </recommendedName>
    <alternativeName>
        <fullName evidence="3">30S ribosomal protein S8e</fullName>
    </alternativeName>
</protein>
<comment type="subunit">
    <text evidence="1">Part of the 30S ribosomal subunit.</text>
</comment>
<comment type="similarity">
    <text evidence="1">Belongs to the eukaryotic ribosomal protein eS8 family.</text>
</comment>
<feature type="chain" id="PRO_0000304175" description="Small ribosomal subunit protein eS8">
    <location>
        <begin position="1"/>
        <end position="126"/>
    </location>
</feature>
<feature type="region of interest" description="Disordered" evidence="2">
    <location>
        <begin position="1"/>
        <end position="35"/>
    </location>
</feature>
<feature type="compositionally biased region" description="Polar residues" evidence="2">
    <location>
        <begin position="1"/>
        <end position="10"/>
    </location>
</feature>
<name>RS8E_METST</name>
<reference key="1">
    <citation type="journal article" date="2006" name="J. Bacteriol.">
        <title>The genome sequence of Methanosphaera stadtmanae reveals why this human intestinal archaeon is restricted to methanol and H2 for methane formation and ATP synthesis.</title>
        <authorList>
            <person name="Fricke W.F."/>
            <person name="Seedorf H."/>
            <person name="Henne A."/>
            <person name="Kruer M."/>
            <person name="Liesegang H."/>
            <person name="Hedderich R."/>
            <person name="Gottschalk G."/>
            <person name="Thauer R.K."/>
        </authorList>
    </citation>
    <scope>NUCLEOTIDE SEQUENCE [LARGE SCALE GENOMIC DNA]</scope>
    <source>
        <strain>ATCC 43021 / DSM 3091 / JCM 11832 / MCB-3</strain>
    </source>
</reference>
<evidence type="ECO:0000255" key="1">
    <source>
        <dbReference type="HAMAP-Rule" id="MF_00029"/>
    </source>
</evidence>
<evidence type="ECO:0000256" key="2">
    <source>
        <dbReference type="SAM" id="MobiDB-lite"/>
    </source>
</evidence>
<evidence type="ECO:0000305" key="3"/>